<keyword id="KW-0175">Coiled coil</keyword>
<keyword id="KW-0597">Phosphoprotein</keyword>
<keyword id="KW-1185">Reference proteome</keyword>
<dbReference type="EMBL" id="AY546089">
    <property type="protein sequence ID" value="AAT10387.1"/>
    <property type="molecule type" value="mRNA"/>
</dbReference>
<dbReference type="EMBL" id="AL928673">
    <property type="status" value="NOT_ANNOTATED_CDS"/>
    <property type="molecule type" value="Genomic_DNA"/>
</dbReference>
<dbReference type="EMBL" id="AK008612">
    <property type="protein sequence ID" value="BAB25777.1"/>
    <property type="molecule type" value="mRNA"/>
</dbReference>
<dbReference type="CCDS" id="CCDS18357.1"/>
<dbReference type="RefSeq" id="NP_081230.1">
    <property type="nucleotide sequence ID" value="NM_026954.1"/>
</dbReference>
<dbReference type="SMR" id="Q673H1"/>
<dbReference type="BioGRID" id="213250">
    <property type="interactions" value="1"/>
</dbReference>
<dbReference type="FunCoup" id="Q673H1">
    <property type="interactions" value="2"/>
</dbReference>
<dbReference type="STRING" id="10090.ENSMUSP00000069652"/>
<dbReference type="iPTMnet" id="Q673H1"/>
<dbReference type="PhosphoSitePlus" id="Q673H1"/>
<dbReference type="PaxDb" id="10090-ENSMUSP00000069652"/>
<dbReference type="PeptideAtlas" id="Q673H1"/>
<dbReference type="ProteomicsDB" id="298385"/>
<dbReference type="Pumba" id="Q673H1"/>
<dbReference type="Antibodypedia" id="24938">
    <property type="antibodies" value="118 antibodies from 22 providers"/>
</dbReference>
<dbReference type="Ensembl" id="ENSMUST00000066774.6">
    <property type="protein sequence ID" value="ENSMUSP00000069652.5"/>
    <property type="gene ID" value="ENSMUSG00000054000.6"/>
</dbReference>
<dbReference type="GeneID" id="69136"/>
<dbReference type="KEGG" id="mmu:69136"/>
<dbReference type="UCSC" id="uc008tou.1">
    <property type="organism name" value="mouse"/>
</dbReference>
<dbReference type="AGR" id="MGI:2684283"/>
<dbReference type="CTD" id="286319"/>
<dbReference type="MGI" id="MGI:2684283">
    <property type="gene designation" value="Tusc1"/>
</dbReference>
<dbReference type="VEuPathDB" id="HostDB:ENSMUSG00000054000"/>
<dbReference type="eggNOG" id="ENOG502SVWC">
    <property type="taxonomic scope" value="Eukaryota"/>
</dbReference>
<dbReference type="GeneTree" id="ENSGT00390000013920"/>
<dbReference type="HOGENOM" id="CLU_113559_0_0_1"/>
<dbReference type="InParanoid" id="Q673H1"/>
<dbReference type="OMA" id="MGPMWRM"/>
<dbReference type="OrthoDB" id="9838253at2759"/>
<dbReference type="PhylomeDB" id="Q673H1"/>
<dbReference type="TreeFam" id="TF336220"/>
<dbReference type="BioGRID-ORCS" id="69136">
    <property type="hits" value="2 hits in 77 CRISPR screens"/>
</dbReference>
<dbReference type="PRO" id="PR:Q673H1"/>
<dbReference type="Proteomes" id="UP000000589">
    <property type="component" value="Chromosome 4"/>
</dbReference>
<dbReference type="RNAct" id="Q673H1">
    <property type="molecule type" value="protein"/>
</dbReference>
<dbReference type="Bgee" id="ENSMUSG00000054000">
    <property type="expression patterns" value="Expressed in humerus cartilage element and 212 other cell types or tissues"/>
</dbReference>
<dbReference type="InterPro" id="IPR043450">
    <property type="entry name" value="CCDC89-like"/>
</dbReference>
<dbReference type="PANTHER" id="PTHR34768">
    <property type="entry name" value="COILED-COIL DOMAIN-CONTAINING PROTEIN 89"/>
    <property type="match status" value="1"/>
</dbReference>
<dbReference type="PANTHER" id="PTHR34768:SF3">
    <property type="entry name" value="TUMOR SUPPRESSOR CANDIDATE GENE 1 PROTEIN"/>
    <property type="match status" value="1"/>
</dbReference>
<sequence>MWRMRGGATRRGSCGGEGGGSRGESGRLGRAREGGGGGGGVGWRGRAGGARRQLEERFADLAASHLEALRARDERDRQNARLREENARLRLENRRLRRENRSLFRQALRLPGDSGEREAAVETLAPDEPATNRKARGHGREEEPGSPRALRARLEKLEVMYRRALLQLHLEQQGARPPGAIEEPPLQETATGLCAHDPDVPRPWL</sequence>
<gene>
    <name type="primary">Tusc1</name>
</gene>
<evidence type="ECO:0000250" key="1">
    <source>
        <dbReference type="UniProtKB" id="Q2TAM9"/>
    </source>
</evidence>
<evidence type="ECO:0000255" key="2"/>
<evidence type="ECO:0000256" key="3">
    <source>
        <dbReference type="SAM" id="MobiDB-lite"/>
    </source>
</evidence>
<feature type="chain" id="PRO_0000312285" description="Tumor suppressor candidate gene 1 protein homolog">
    <location>
        <begin position="1"/>
        <end position="205"/>
    </location>
</feature>
<feature type="region of interest" description="Disordered" evidence="3">
    <location>
        <begin position="1"/>
        <end position="49"/>
    </location>
</feature>
<feature type="region of interest" description="Disordered" evidence="3">
    <location>
        <begin position="113"/>
        <end position="149"/>
    </location>
</feature>
<feature type="region of interest" description="Disordered" evidence="3">
    <location>
        <begin position="174"/>
        <end position="205"/>
    </location>
</feature>
<feature type="coiled-coil region" evidence="2">
    <location>
        <begin position="66"/>
        <end position="110"/>
    </location>
</feature>
<feature type="compositionally biased region" description="Low complexity" evidence="3">
    <location>
        <begin position="1"/>
        <end position="12"/>
    </location>
</feature>
<feature type="compositionally biased region" description="Gly residues" evidence="3">
    <location>
        <begin position="13"/>
        <end position="23"/>
    </location>
</feature>
<feature type="compositionally biased region" description="Basic and acidic residues" evidence="3">
    <location>
        <begin position="24"/>
        <end position="33"/>
    </location>
</feature>
<feature type="compositionally biased region" description="Gly residues" evidence="3">
    <location>
        <begin position="34"/>
        <end position="48"/>
    </location>
</feature>
<feature type="compositionally biased region" description="Basic and acidic residues" evidence="3">
    <location>
        <begin position="196"/>
        <end position="205"/>
    </location>
</feature>
<feature type="modified residue" description="Phosphoserine" evidence="1">
    <location>
        <position position="146"/>
    </location>
</feature>
<reference key="1">
    <citation type="journal article" date="2004" name="Oncogene">
        <title>Identifying novel homozygous deletions by microsatellite analysis and characterization of tumor suppressor candidate 1 gene, TUSC1, on chromosome 9p in human lung cancer.</title>
        <authorList>
            <person name="Shan Z."/>
            <person name="Parker T."/>
            <person name="Wiest J.S."/>
        </authorList>
    </citation>
    <scope>NUCLEOTIDE SEQUENCE [MRNA]</scope>
</reference>
<reference key="2">
    <citation type="journal article" date="2009" name="PLoS Biol.">
        <title>Lineage-specific biology revealed by a finished genome assembly of the mouse.</title>
        <authorList>
            <person name="Church D.M."/>
            <person name="Goodstadt L."/>
            <person name="Hillier L.W."/>
            <person name="Zody M.C."/>
            <person name="Goldstein S."/>
            <person name="She X."/>
            <person name="Bult C.J."/>
            <person name="Agarwala R."/>
            <person name="Cherry J.L."/>
            <person name="DiCuccio M."/>
            <person name="Hlavina W."/>
            <person name="Kapustin Y."/>
            <person name="Meric P."/>
            <person name="Maglott D."/>
            <person name="Birtle Z."/>
            <person name="Marques A.C."/>
            <person name="Graves T."/>
            <person name="Zhou S."/>
            <person name="Teague B."/>
            <person name="Potamousis K."/>
            <person name="Churas C."/>
            <person name="Place M."/>
            <person name="Herschleb J."/>
            <person name="Runnheim R."/>
            <person name="Forrest D."/>
            <person name="Amos-Landgraf J."/>
            <person name="Schwartz D.C."/>
            <person name="Cheng Z."/>
            <person name="Lindblad-Toh K."/>
            <person name="Eichler E.E."/>
            <person name="Ponting C.P."/>
        </authorList>
    </citation>
    <scope>NUCLEOTIDE SEQUENCE [LARGE SCALE GENOMIC DNA]</scope>
    <source>
        <strain>C57BL/6J</strain>
    </source>
</reference>
<reference key="3">
    <citation type="journal article" date="2005" name="Science">
        <title>The transcriptional landscape of the mammalian genome.</title>
        <authorList>
            <person name="Carninci P."/>
            <person name="Kasukawa T."/>
            <person name="Katayama S."/>
            <person name="Gough J."/>
            <person name="Frith M.C."/>
            <person name="Maeda N."/>
            <person name="Oyama R."/>
            <person name="Ravasi T."/>
            <person name="Lenhard B."/>
            <person name="Wells C."/>
            <person name="Kodzius R."/>
            <person name="Shimokawa K."/>
            <person name="Bajic V.B."/>
            <person name="Brenner S.E."/>
            <person name="Batalov S."/>
            <person name="Forrest A.R."/>
            <person name="Zavolan M."/>
            <person name="Davis M.J."/>
            <person name="Wilming L.G."/>
            <person name="Aidinis V."/>
            <person name="Allen J.E."/>
            <person name="Ambesi-Impiombato A."/>
            <person name="Apweiler R."/>
            <person name="Aturaliya R.N."/>
            <person name="Bailey T.L."/>
            <person name="Bansal M."/>
            <person name="Baxter L."/>
            <person name="Beisel K.W."/>
            <person name="Bersano T."/>
            <person name="Bono H."/>
            <person name="Chalk A.M."/>
            <person name="Chiu K.P."/>
            <person name="Choudhary V."/>
            <person name="Christoffels A."/>
            <person name="Clutterbuck D.R."/>
            <person name="Crowe M.L."/>
            <person name="Dalla E."/>
            <person name="Dalrymple B.P."/>
            <person name="de Bono B."/>
            <person name="Della Gatta G."/>
            <person name="di Bernardo D."/>
            <person name="Down T."/>
            <person name="Engstrom P."/>
            <person name="Fagiolini M."/>
            <person name="Faulkner G."/>
            <person name="Fletcher C.F."/>
            <person name="Fukushima T."/>
            <person name="Furuno M."/>
            <person name="Futaki S."/>
            <person name="Gariboldi M."/>
            <person name="Georgii-Hemming P."/>
            <person name="Gingeras T.R."/>
            <person name="Gojobori T."/>
            <person name="Green R.E."/>
            <person name="Gustincich S."/>
            <person name="Harbers M."/>
            <person name="Hayashi Y."/>
            <person name="Hensch T.K."/>
            <person name="Hirokawa N."/>
            <person name="Hill D."/>
            <person name="Huminiecki L."/>
            <person name="Iacono M."/>
            <person name="Ikeo K."/>
            <person name="Iwama A."/>
            <person name="Ishikawa T."/>
            <person name="Jakt M."/>
            <person name="Kanapin A."/>
            <person name="Katoh M."/>
            <person name="Kawasawa Y."/>
            <person name="Kelso J."/>
            <person name="Kitamura H."/>
            <person name="Kitano H."/>
            <person name="Kollias G."/>
            <person name="Krishnan S.P."/>
            <person name="Kruger A."/>
            <person name="Kummerfeld S.K."/>
            <person name="Kurochkin I.V."/>
            <person name="Lareau L.F."/>
            <person name="Lazarevic D."/>
            <person name="Lipovich L."/>
            <person name="Liu J."/>
            <person name="Liuni S."/>
            <person name="McWilliam S."/>
            <person name="Madan Babu M."/>
            <person name="Madera M."/>
            <person name="Marchionni L."/>
            <person name="Matsuda H."/>
            <person name="Matsuzawa S."/>
            <person name="Miki H."/>
            <person name="Mignone F."/>
            <person name="Miyake S."/>
            <person name="Morris K."/>
            <person name="Mottagui-Tabar S."/>
            <person name="Mulder N."/>
            <person name="Nakano N."/>
            <person name="Nakauchi H."/>
            <person name="Ng P."/>
            <person name="Nilsson R."/>
            <person name="Nishiguchi S."/>
            <person name="Nishikawa S."/>
            <person name="Nori F."/>
            <person name="Ohara O."/>
            <person name="Okazaki Y."/>
            <person name="Orlando V."/>
            <person name="Pang K.C."/>
            <person name="Pavan W.J."/>
            <person name="Pavesi G."/>
            <person name="Pesole G."/>
            <person name="Petrovsky N."/>
            <person name="Piazza S."/>
            <person name="Reed J."/>
            <person name="Reid J.F."/>
            <person name="Ring B.Z."/>
            <person name="Ringwald M."/>
            <person name="Rost B."/>
            <person name="Ruan Y."/>
            <person name="Salzberg S.L."/>
            <person name="Sandelin A."/>
            <person name="Schneider C."/>
            <person name="Schoenbach C."/>
            <person name="Sekiguchi K."/>
            <person name="Semple C.A."/>
            <person name="Seno S."/>
            <person name="Sessa L."/>
            <person name="Sheng Y."/>
            <person name="Shibata Y."/>
            <person name="Shimada H."/>
            <person name="Shimada K."/>
            <person name="Silva D."/>
            <person name="Sinclair B."/>
            <person name="Sperling S."/>
            <person name="Stupka E."/>
            <person name="Sugiura K."/>
            <person name="Sultana R."/>
            <person name="Takenaka Y."/>
            <person name="Taki K."/>
            <person name="Tammoja K."/>
            <person name="Tan S.L."/>
            <person name="Tang S."/>
            <person name="Taylor M.S."/>
            <person name="Tegner J."/>
            <person name="Teichmann S.A."/>
            <person name="Ueda H.R."/>
            <person name="van Nimwegen E."/>
            <person name="Verardo R."/>
            <person name="Wei C.L."/>
            <person name="Yagi K."/>
            <person name="Yamanishi H."/>
            <person name="Zabarovsky E."/>
            <person name="Zhu S."/>
            <person name="Zimmer A."/>
            <person name="Hide W."/>
            <person name="Bult C."/>
            <person name="Grimmond S.M."/>
            <person name="Teasdale R.D."/>
            <person name="Liu E.T."/>
            <person name="Brusic V."/>
            <person name="Quackenbush J."/>
            <person name="Wahlestedt C."/>
            <person name="Mattick J.S."/>
            <person name="Hume D.A."/>
            <person name="Kai C."/>
            <person name="Sasaki D."/>
            <person name="Tomaru Y."/>
            <person name="Fukuda S."/>
            <person name="Kanamori-Katayama M."/>
            <person name="Suzuki M."/>
            <person name="Aoki J."/>
            <person name="Arakawa T."/>
            <person name="Iida J."/>
            <person name="Imamura K."/>
            <person name="Itoh M."/>
            <person name="Kato T."/>
            <person name="Kawaji H."/>
            <person name="Kawagashira N."/>
            <person name="Kawashima T."/>
            <person name="Kojima M."/>
            <person name="Kondo S."/>
            <person name="Konno H."/>
            <person name="Nakano K."/>
            <person name="Ninomiya N."/>
            <person name="Nishio T."/>
            <person name="Okada M."/>
            <person name="Plessy C."/>
            <person name="Shibata K."/>
            <person name="Shiraki T."/>
            <person name="Suzuki S."/>
            <person name="Tagami M."/>
            <person name="Waki K."/>
            <person name="Watahiki A."/>
            <person name="Okamura-Oho Y."/>
            <person name="Suzuki H."/>
            <person name="Kawai J."/>
            <person name="Hayashizaki Y."/>
        </authorList>
    </citation>
    <scope>NUCLEOTIDE SEQUENCE [LARGE SCALE MRNA] OF 67-205</scope>
    <source>
        <strain>C57BL/6J</strain>
        <tissue>Stomach</tissue>
    </source>
</reference>
<reference key="4">
    <citation type="journal article" date="2010" name="Cell">
        <title>A tissue-specific atlas of mouse protein phosphorylation and expression.</title>
        <authorList>
            <person name="Huttlin E.L."/>
            <person name="Jedrychowski M.P."/>
            <person name="Elias J.E."/>
            <person name="Goswami T."/>
            <person name="Rad R."/>
            <person name="Beausoleil S.A."/>
            <person name="Villen J."/>
            <person name="Haas W."/>
            <person name="Sowa M.E."/>
            <person name="Gygi S.P."/>
        </authorList>
    </citation>
    <scope>IDENTIFICATION BY MASS SPECTROMETRY [LARGE SCALE ANALYSIS]</scope>
    <source>
        <tissue>Spleen</tissue>
        <tissue>Testis</tissue>
    </source>
</reference>
<accession>Q673H1</accession>
<accession>Q9CVE2</accession>
<name>TUSC1_MOUSE</name>
<protein>
    <recommendedName>
        <fullName>Tumor suppressor candidate gene 1 protein homolog</fullName>
    </recommendedName>
</protein>
<organism>
    <name type="scientific">Mus musculus</name>
    <name type="common">Mouse</name>
    <dbReference type="NCBI Taxonomy" id="10090"/>
    <lineage>
        <taxon>Eukaryota</taxon>
        <taxon>Metazoa</taxon>
        <taxon>Chordata</taxon>
        <taxon>Craniata</taxon>
        <taxon>Vertebrata</taxon>
        <taxon>Euteleostomi</taxon>
        <taxon>Mammalia</taxon>
        <taxon>Eutheria</taxon>
        <taxon>Euarchontoglires</taxon>
        <taxon>Glires</taxon>
        <taxon>Rodentia</taxon>
        <taxon>Myomorpha</taxon>
        <taxon>Muroidea</taxon>
        <taxon>Muridae</taxon>
        <taxon>Murinae</taxon>
        <taxon>Mus</taxon>
        <taxon>Mus</taxon>
    </lineage>
</organism>
<proteinExistence type="evidence at protein level"/>